<accession>Q46KE1</accession>
<dbReference type="EMBL" id="CP000095">
    <property type="protein sequence ID" value="AAZ58037.1"/>
    <property type="molecule type" value="Genomic_DNA"/>
</dbReference>
<dbReference type="RefSeq" id="WP_011294643.1">
    <property type="nucleotide sequence ID" value="NC_007335.2"/>
</dbReference>
<dbReference type="SMR" id="Q46KE1"/>
<dbReference type="STRING" id="59920.PMN2A_0546"/>
<dbReference type="KEGG" id="pmn:PMN2A_0546"/>
<dbReference type="HOGENOM" id="CLU_212133_1_1_3"/>
<dbReference type="OrthoDB" id="541846at2"/>
<dbReference type="PhylomeDB" id="Q46KE1"/>
<dbReference type="Proteomes" id="UP000002535">
    <property type="component" value="Chromosome"/>
</dbReference>
<dbReference type="GO" id="GO:0009522">
    <property type="term" value="C:photosystem I"/>
    <property type="evidence" value="ECO:0007669"/>
    <property type="project" value="UniProtKB-KW"/>
</dbReference>
<dbReference type="GO" id="GO:0031676">
    <property type="term" value="C:plasma membrane-derived thylakoid membrane"/>
    <property type="evidence" value="ECO:0007669"/>
    <property type="project" value="UniProtKB-SubCell"/>
</dbReference>
<dbReference type="GO" id="GO:0015979">
    <property type="term" value="P:photosynthesis"/>
    <property type="evidence" value="ECO:0007669"/>
    <property type="project" value="UniProtKB-UniRule"/>
</dbReference>
<dbReference type="Gene3D" id="1.20.5.510">
    <property type="entry name" value="Single helix bin"/>
    <property type="match status" value="1"/>
</dbReference>
<dbReference type="HAMAP" id="MF_00522">
    <property type="entry name" value="PSI_PsaJ"/>
    <property type="match status" value="1"/>
</dbReference>
<dbReference type="InterPro" id="IPR002615">
    <property type="entry name" value="PSI_PsaJ"/>
</dbReference>
<dbReference type="InterPro" id="IPR036062">
    <property type="entry name" value="PSI_PsaJ_sf"/>
</dbReference>
<dbReference type="Pfam" id="PF01701">
    <property type="entry name" value="PSI_PsaJ"/>
    <property type="match status" value="1"/>
</dbReference>
<dbReference type="SUPFAM" id="SSF81544">
    <property type="entry name" value="Subunit IX of photosystem I reaction centre, PsaJ"/>
    <property type="match status" value="1"/>
</dbReference>
<evidence type="ECO:0000250" key="1"/>
<evidence type="ECO:0000255" key="2"/>
<evidence type="ECO:0000305" key="3"/>
<name>PSAJ2_PROMT</name>
<keyword id="KW-0472">Membrane</keyword>
<keyword id="KW-0602">Photosynthesis</keyword>
<keyword id="KW-0603">Photosystem I</keyword>
<keyword id="KW-1185">Reference proteome</keyword>
<keyword id="KW-0793">Thylakoid</keyword>
<keyword id="KW-0812">Transmembrane</keyword>
<keyword id="KW-1133">Transmembrane helix</keyword>
<protein>
    <recommendedName>
        <fullName>Photosystem I reaction center subunit IX 2</fullName>
    </recommendedName>
</protein>
<sequence length="44" mass="5147">MFKIFRTKWFRSAPVLATLWLSSTAVILIGVNSYFPDYLFMPMS</sequence>
<comment type="function">
    <text evidence="1">May help in the organization of the PsaE and PsaF subunits.</text>
</comment>
<comment type="subcellular location">
    <subcellularLocation>
        <location evidence="1">Cellular thylakoid membrane</location>
        <topology evidence="1">Single-pass membrane protein</topology>
    </subcellularLocation>
</comment>
<comment type="similarity">
    <text evidence="3">Belongs to the PsaJ family.</text>
</comment>
<proteinExistence type="inferred from homology"/>
<organism>
    <name type="scientific">Prochlorococcus marinus (strain NATL2A)</name>
    <dbReference type="NCBI Taxonomy" id="59920"/>
    <lineage>
        <taxon>Bacteria</taxon>
        <taxon>Bacillati</taxon>
        <taxon>Cyanobacteriota</taxon>
        <taxon>Cyanophyceae</taxon>
        <taxon>Synechococcales</taxon>
        <taxon>Prochlorococcaceae</taxon>
        <taxon>Prochlorococcus</taxon>
    </lineage>
</organism>
<reference key="1">
    <citation type="journal article" date="2007" name="PLoS Genet.">
        <title>Patterns and implications of gene gain and loss in the evolution of Prochlorococcus.</title>
        <authorList>
            <person name="Kettler G.C."/>
            <person name="Martiny A.C."/>
            <person name="Huang K."/>
            <person name="Zucker J."/>
            <person name="Coleman M.L."/>
            <person name="Rodrigue S."/>
            <person name="Chen F."/>
            <person name="Lapidus A."/>
            <person name="Ferriera S."/>
            <person name="Johnson J."/>
            <person name="Steglich C."/>
            <person name="Church G.M."/>
            <person name="Richardson P."/>
            <person name="Chisholm S.W."/>
        </authorList>
    </citation>
    <scope>NUCLEOTIDE SEQUENCE [LARGE SCALE GENOMIC DNA]</scope>
    <source>
        <strain>NATL2A</strain>
    </source>
</reference>
<feature type="chain" id="PRO_0000354118" description="Photosystem I reaction center subunit IX 2">
    <location>
        <begin position="1"/>
        <end position="44"/>
    </location>
</feature>
<feature type="transmembrane region" description="Helical" evidence="2">
    <location>
        <begin position="13"/>
        <end position="35"/>
    </location>
</feature>
<gene>
    <name type="primary">psaJ2</name>
    <name type="ordered locus">PMN2A_0546</name>
</gene>